<name>LOLB_VIBVY</name>
<comment type="function">
    <text evidence="1">Plays a critical role in the incorporation of lipoproteins in the outer membrane after they are released by the LolA protein.</text>
</comment>
<comment type="subunit">
    <text evidence="1">Monomer.</text>
</comment>
<comment type="subcellular location">
    <subcellularLocation>
        <location evidence="1">Cell outer membrane</location>
        <topology evidence="1">Lipid-anchor</topology>
    </subcellularLocation>
</comment>
<comment type="similarity">
    <text evidence="1">Belongs to the LolB family.</text>
</comment>
<evidence type="ECO:0000255" key="1">
    <source>
        <dbReference type="HAMAP-Rule" id="MF_00233"/>
    </source>
</evidence>
<sequence>MFRRTYFWLMLLPLFMVGCTGLPDHPTSVEWQSHQAKLSQIQSFQAVGKLGYISPDQRQNLNFYWKHSPEQSNLRFTTFLGQTALNLTMTPQGARVETYDDQILTAANATALVQQLTGLVIPVEQLSDWIIGLPNGADDFQLNEQNTLSSLEKDLNFQRWHIAYTQYRDVEFHQQVVPLPAKLSLTQQDIKLNIVVSKWTLK</sequence>
<reference key="1">
    <citation type="journal article" date="2003" name="Genome Res.">
        <title>Comparative genome analysis of Vibrio vulnificus, a marine pathogen.</title>
        <authorList>
            <person name="Chen C.-Y."/>
            <person name="Wu K.-M."/>
            <person name="Chang Y.-C."/>
            <person name="Chang C.-H."/>
            <person name="Tsai H.-C."/>
            <person name="Liao T.-L."/>
            <person name="Liu Y.-M."/>
            <person name="Chen H.-J."/>
            <person name="Shen A.B.-T."/>
            <person name="Li J.-C."/>
            <person name="Su T.-L."/>
            <person name="Shao C.-P."/>
            <person name="Lee C.-T."/>
            <person name="Hor L.-I."/>
            <person name="Tsai S.-F."/>
        </authorList>
    </citation>
    <scope>NUCLEOTIDE SEQUENCE [LARGE SCALE GENOMIC DNA]</scope>
    <source>
        <strain>YJ016</strain>
    </source>
</reference>
<accession>Q7MMY8</accession>
<protein>
    <recommendedName>
        <fullName evidence="1">Outer-membrane lipoprotein LolB</fullName>
    </recommendedName>
</protein>
<feature type="signal peptide" evidence="1">
    <location>
        <begin position="1"/>
        <end position="18"/>
    </location>
</feature>
<feature type="chain" id="PRO_0000018317" description="Outer-membrane lipoprotein LolB">
    <location>
        <begin position="19"/>
        <end position="202"/>
    </location>
</feature>
<feature type="lipid moiety-binding region" description="N-palmitoyl cysteine" evidence="1">
    <location>
        <position position="19"/>
    </location>
</feature>
<feature type="lipid moiety-binding region" description="S-diacylglycerol cysteine" evidence="1">
    <location>
        <position position="19"/>
    </location>
</feature>
<gene>
    <name evidence="1" type="primary">lolB</name>
    <name type="ordered locus">VV0929</name>
</gene>
<organism>
    <name type="scientific">Vibrio vulnificus (strain YJ016)</name>
    <dbReference type="NCBI Taxonomy" id="196600"/>
    <lineage>
        <taxon>Bacteria</taxon>
        <taxon>Pseudomonadati</taxon>
        <taxon>Pseudomonadota</taxon>
        <taxon>Gammaproteobacteria</taxon>
        <taxon>Vibrionales</taxon>
        <taxon>Vibrionaceae</taxon>
        <taxon>Vibrio</taxon>
    </lineage>
</organism>
<keyword id="KW-0998">Cell outer membrane</keyword>
<keyword id="KW-0143">Chaperone</keyword>
<keyword id="KW-0449">Lipoprotein</keyword>
<keyword id="KW-0472">Membrane</keyword>
<keyword id="KW-0564">Palmitate</keyword>
<keyword id="KW-0653">Protein transport</keyword>
<keyword id="KW-0732">Signal</keyword>
<keyword id="KW-0813">Transport</keyword>
<proteinExistence type="inferred from homology"/>
<dbReference type="EMBL" id="BA000037">
    <property type="protein sequence ID" value="BAC93693.1"/>
    <property type="molecule type" value="Genomic_DNA"/>
</dbReference>
<dbReference type="RefSeq" id="WP_011149727.1">
    <property type="nucleotide sequence ID" value="NC_005139.1"/>
</dbReference>
<dbReference type="SMR" id="Q7MMY8"/>
<dbReference type="STRING" id="672.VV93_v1c08600"/>
<dbReference type="KEGG" id="vvy:VV0929"/>
<dbReference type="PATRIC" id="fig|196600.6.peg.929"/>
<dbReference type="eggNOG" id="COG3017">
    <property type="taxonomic scope" value="Bacteria"/>
</dbReference>
<dbReference type="HOGENOM" id="CLU_092816_1_0_6"/>
<dbReference type="Proteomes" id="UP000002675">
    <property type="component" value="Chromosome I"/>
</dbReference>
<dbReference type="GO" id="GO:0009279">
    <property type="term" value="C:cell outer membrane"/>
    <property type="evidence" value="ECO:0007669"/>
    <property type="project" value="UniProtKB-SubCell"/>
</dbReference>
<dbReference type="GO" id="GO:0044874">
    <property type="term" value="P:lipoprotein localization to outer membrane"/>
    <property type="evidence" value="ECO:0007669"/>
    <property type="project" value="UniProtKB-UniRule"/>
</dbReference>
<dbReference type="GO" id="GO:0015031">
    <property type="term" value="P:protein transport"/>
    <property type="evidence" value="ECO:0007669"/>
    <property type="project" value="UniProtKB-KW"/>
</dbReference>
<dbReference type="CDD" id="cd16326">
    <property type="entry name" value="LolB"/>
    <property type="match status" value="1"/>
</dbReference>
<dbReference type="Gene3D" id="2.50.20.10">
    <property type="entry name" value="Lipoprotein localisation LolA/LolB/LppX"/>
    <property type="match status" value="1"/>
</dbReference>
<dbReference type="HAMAP" id="MF_00233">
    <property type="entry name" value="LolB"/>
    <property type="match status" value="1"/>
</dbReference>
<dbReference type="InterPro" id="IPR029046">
    <property type="entry name" value="LolA/LolB/LppX"/>
</dbReference>
<dbReference type="InterPro" id="IPR004565">
    <property type="entry name" value="OM_lipoprot_LolB"/>
</dbReference>
<dbReference type="NCBIfam" id="TIGR00548">
    <property type="entry name" value="lolB"/>
    <property type="match status" value="1"/>
</dbReference>
<dbReference type="Pfam" id="PF03550">
    <property type="entry name" value="LolB"/>
    <property type="match status" value="1"/>
</dbReference>
<dbReference type="SUPFAM" id="SSF89392">
    <property type="entry name" value="Prokaryotic lipoproteins and lipoprotein localization factors"/>
    <property type="match status" value="1"/>
</dbReference>
<dbReference type="PROSITE" id="PS51257">
    <property type="entry name" value="PROKAR_LIPOPROTEIN"/>
    <property type="match status" value="1"/>
</dbReference>